<protein>
    <recommendedName>
        <fullName evidence="1">Isopentenyl-diphosphate delta-isomerase</fullName>
        <shortName evidence="1">IPP isomerase</shortName>
        <ecNumber evidence="1">5.3.3.2</ecNumber>
    </recommendedName>
    <alternativeName>
        <fullName evidence="1">Isopentenyl diphosphate:dimethylallyl diphosphate isomerase</fullName>
    </alternativeName>
    <alternativeName>
        <fullName evidence="1">Isopentenyl pyrophosphate isomerase</fullName>
    </alternativeName>
    <alternativeName>
        <fullName evidence="1">Type 2 isopentenyl diphosphate isomerase</fullName>
        <shortName evidence="1">IDI-2</shortName>
    </alternativeName>
</protein>
<accession>Q8TX99</accession>
<comment type="function">
    <text evidence="1">Involved in the biosynthesis of isoprenoids. Catalyzes the 1,3-allylic rearrangement of the homoallylic substrate isopentenyl (IPP) to its allylic isomer, dimethylallyl diphosphate (DMAPP).</text>
</comment>
<comment type="catalytic activity">
    <reaction evidence="1">
        <text>isopentenyl diphosphate = dimethylallyl diphosphate</text>
        <dbReference type="Rhea" id="RHEA:23284"/>
        <dbReference type="ChEBI" id="CHEBI:57623"/>
        <dbReference type="ChEBI" id="CHEBI:128769"/>
        <dbReference type="EC" id="5.3.3.2"/>
    </reaction>
</comment>
<comment type="cofactor">
    <cofactor evidence="1">
        <name>FMN</name>
        <dbReference type="ChEBI" id="CHEBI:58210"/>
    </cofactor>
</comment>
<comment type="cofactor">
    <cofactor evidence="1">
        <name>NADPH</name>
        <dbReference type="ChEBI" id="CHEBI:57783"/>
    </cofactor>
</comment>
<comment type="cofactor">
    <cofactor evidence="1">
        <name>Mg(2+)</name>
        <dbReference type="ChEBI" id="CHEBI:18420"/>
    </cofactor>
</comment>
<comment type="subunit">
    <text evidence="1">Homooctamer. Dimer of tetramers.</text>
</comment>
<comment type="subcellular location">
    <subcellularLocation>
        <location evidence="1">Cytoplasm</location>
    </subcellularLocation>
</comment>
<comment type="similarity">
    <text evidence="1">Belongs to the IPP isomerase type 2 family.</text>
</comment>
<comment type="sequence caution" evidence="2">
    <conflict type="erroneous initiation">
        <sequence resource="EMBL-CDS" id="AAM01990"/>
    </conflict>
    <text>Extended N-terminus.</text>
</comment>
<gene>
    <name evidence="1" type="primary">fni</name>
    <name type="synonym">lldD</name>
    <name type="ordered locus">MK0776</name>
</gene>
<feature type="chain" id="PRO_0000134445" description="Isopentenyl-diphosphate delta-isomerase">
    <location>
        <begin position="1"/>
        <end position="365"/>
    </location>
</feature>
<feature type="binding site" evidence="1">
    <location>
        <begin position="4"/>
        <end position="5"/>
    </location>
    <ligand>
        <name>substrate</name>
    </ligand>
</feature>
<feature type="binding site" evidence="1">
    <location>
        <begin position="62"/>
        <end position="64"/>
    </location>
    <ligand>
        <name>FMN</name>
        <dbReference type="ChEBI" id="CHEBI:58210"/>
    </ligand>
</feature>
<feature type="binding site" evidence="1">
    <location>
        <begin position="92"/>
        <end position="94"/>
    </location>
    <ligand>
        <name>substrate</name>
    </ligand>
</feature>
<feature type="binding site" evidence="1">
    <location>
        <position position="92"/>
    </location>
    <ligand>
        <name>FMN</name>
        <dbReference type="ChEBI" id="CHEBI:58210"/>
    </ligand>
</feature>
<feature type="binding site" evidence="1">
    <location>
        <position position="121"/>
    </location>
    <ligand>
        <name>FMN</name>
        <dbReference type="ChEBI" id="CHEBI:58210"/>
    </ligand>
</feature>
<feature type="binding site" evidence="1">
    <location>
        <position position="155"/>
    </location>
    <ligand>
        <name>substrate</name>
    </ligand>
</feature>
<feature type="binding site" evidence="1">
    <location>
        <position position="156"/>
    </location>
    <ligand>
        <name>Mg(2+)</name>
        <dbReference type="ChEBI" id="CHEBI:18420"/>
    </ligand>
</feature>
<feature type="binding site" evidence="1">
    <location>
        <position position="187"/>
    </location>
    <ligand>
        <name>FMN</name>
        <dbReference type="ChEBI" id="CHEBI:58210"/>
    </ligand>
</feature>
<feature type="binding site" evidence="1">
    <location>
        <position position="216"/>
    </location>
    <ligand>
        <name>FMN</name>
        <dbReference type="ChEBI" id="CHEBI:58210"/>
    </ligand>
</feature>
<feature type="binding site" evidence="1">
    <location>
        <begin position="267"/>
        <end position="269"/>
    </location>
    <ligand>
        <name>FMN</name>
        <dbReference type="ChEBI" id="CHEBI:58210"/>
    </ligand>
</feature>
<feature type="binding site" evidence="1">
    <location>
        <begin position="288"/>
        <end position="289"/>
    </location>
    <ligand>
        <name>FMN</name>
        <dbReference type="ChEBI" id="CHEBI:58210"/>
    </ligand>
</feature>
<name>IDI2_METKA</name>
<keyword id="KW-0963">Cytoplasm</keyword>
<keyword id="KW-0285">Flavoprotein</keyword>
<keyword id="KW-0288">FMN</keyword>
<keyword id="KW-0413">Isomerase</keyword>
<keyword id="KW-0414">Isoprene biosynthesis</keyword>
<keyword id="KW-0460">Magnesium</keyword>
<keyword id="KW-0479">Metal-binding</keyword>
<keyword id="KW-0521">NADP</keyword>
<keyword id="KW-1185">Reference proteome</keyword>
<proteinExistence type="inferred from homology"/>
<organism>
    <name type="scientific">Methanopyrus kandleri (strain AV19 / DSM 6324 / JCM 9639 / NBRC 100938)</name>
    <dbReference type="NCBI Taxonomy" id="190192"/>
    <lineage>
        <taxon>Archaea</taxon>
        <taxon>Methanobacteriati</taxon>
        <taxon>Methanobacteriota</taxon>
        <taxon>Methanomada group</taxon>
        <taxon>Methanopyri</taxon>
        <taxon>Methanopyrales</taxon>
        <taxon>Methanopyraceae</taxon>
        <taxon>Methanopyrus</taxon>
    </lineage>
</organism>
<sequence length="365" mass="39272">MRERKWEHVLACIWEDVESEESPLFDCVKIVHRALPELDFDDVDMEIELFGKRLSFPLIIAGMTGGHPKTGEINRKLARVARELEIGIGVGSQRAGVKDPEVRWTFEVVREEYPDGLVLANIGLPQLRENGPDLALEVVDMVDADALAVHVNVLQEAVQLEGEADAAGFVDVLAEVCETVDVPVVLKETGAGVSAEDAKLVRDIVDGIDVGGAGGTNWAVVEAVRSKAHGEIPLGYAFSDWGVPTAASILEVRSVVGNDLAIIGTGGVRTGMDVAKVLALGADCAGMALPVLRKVLAEGVRGCVRFLKSIAREVKIAMLMAGCSSVEEMSSVPIVVYGKLREWLECRGVPLDLVCTGDRRTGWNR</sequence>
<evidence type="ECO:0000255" key="1">
    <source>
        <dbReference type="HAMAP-Rule" id="MF_00354"/>
    </source>
</evidence>
<evidence type="ECO:0000305" key="2"/>
<reference key="1">
    <citation type="journal article" date="2002" name="Proc. Natl. Acad. Sci. U.S.A.">
        <title>The complete genome of hyperthermophile Methanopyrus kandleri AV19 and monophyly of archaeal methanogens.</title>
        <authorList>
            <person name="Slesarev A.I."/>
            <person name="Mezhevaya K.V."/>
            <person name="Makarova K.S."/>
            <person name="Polushin N.N."/>
            <person name="Shcherbinina O.V."/>
            <person name="Shakhova V.V."/>
            <person name="Belova G.I."/>
            <person name="Aravind L."/>
            <person name="Natale D.A."/>
            <person name="Rogozin I.B."/>
            <person name="Tatusov R.L."/>
            <person name="Wolf Y.I."/>
            <person name="Stetter K.O."/>
            <person name="Malykh A.G."/>
            <person name="Koonin E.V."/>
            <person name="Kozyavkin S.A."/>
        </authorList>
    </citation>
    <scope>NUCLEOTIDE SEQUENCE [LARGE SCALE GENOMIC DNA]</scope>
    <source>
        <strain>AV19 / DSM 6324 / JCM 9639 / NBRC 100938</strain>
    </source>
</reference>
<dbReference type="EC" id="5.3.3.2" evidence="1"/>
<dbReference type="EMBL" id="AE009439">
    <property type="protein sequence ID" value="AAM01990.1"/>
    <property type="status" value="ALT_INIT"/>
    <property type="molecule type" value="Genomic_DNA"/>
</dbReference>
<dbReference type="SMR" id="Q8TX99"/>
<dbReference type="FunCoup" id="Q8TX99">
    <property type="interactions" value="17"/>
</dbReference>
<dbReference type="STRING" id="190192.MK0776"/>
<dbReference type="PaxDb" id="190192-MK0776"/>
<dbReference type="EnsemblBacteria" id="AAM01990">
    <property type="protein sequence ID" value="AAM01990"/>
    <property type="gene ID" value="MK0776"/>
</dbReference>
<dbReference type="KEGG" id="mka:MK0776"/>
<dbReference type="PATRIC" id="fig|190192.8.peg.817"/>
<dbReference type="HOGENOM" id="CLU_065515_1_0_2"/>
<dbReference type="InParanoid" id="Q8TX99"/>
<dbReference type="Proteomes" id="UP000001826">
    <property type="component" value="Chromosome"/>
</dbReference>
<dbReference type="GO" id="GO:0005737">
    <property type="term" value="C:cytoplasm"/>
    <property type="evidence" value="ECO:0007669"/>
    <property type="project" value="UniProtKB-SubCell"/>
</dbReference>
<dbReference type="GO" id="GO:0010181">
    <property type="term" value="F:FMN binding"/>
    <property type="evidence" value="ECO:0007669"/>
    <property type="project" value="UniProtKB-UniRule"/>
</dbReference>
<dbReference type="GO" id="GO:0004452">
    <property type="term" value="F:isopentenyl-diphosphate delta-isomerase activity"/>
    <property type="evidence" value="ECO:0007669"/>
    <property type="project" value="UniProtKB-UniRule"/>
</dbReference>
<dbReference type="GO" id="GO:0000287">
    <property type="term" value="F:magnesium ion binding"/>
    <property type="evidence" value="ECO:0007669"/>
    <property type="project" value="UniProtKB-UniRule"/>
</dbReference>
<dbReference type="GO" id="GO:0070402">
    <property type="term" value="F:NADPH binding"/>
    <property type="evidence" value="ECO:0007669"/>
    <property type="project" value="UniProtKB-UniRule"/>
</dbReference>
<dbReference type="GO" id="GO:0016491">
    <property type="term" value="F:oxidoreductase activity"/>
    <property type="evidence" value="ECO:0007669"/>
    <property type="project" value="InterPro"/>
</dbReference>
<dbReference type="GO" id="GO:0008299">
    <property type="term" value="P:isoprenoid biosynthetic process"/>
    <property type="evidence" value="ECO:0007669"/>
    <property type="project" value="UniProtKB-UniRule"/>
</dbReference>
<dbReference type="CDD" id="cd02811">
    <property type="entry name" value="IDI-2_FMN"/>
    <property type="match status" value="1"/>
</dbReference>
<dbReference type="Gene3D" id="3.20.20.70">
    <property type="entry name" value="Aldolase class I"/>
    <property type="match status" value="1"/>
</dbReference>
<dbReference type="HAMAP" id="MF_00354">
    <property type="entry name" value="Idi_2"/>
    <property type="match status" value="1"/>
</dbReference>
<dbReference type="InterPro" id="IPR013785">
    <property type="entry name" value="Aldolase_TIM"/>
</dbReference>
<dbReference type="InterPro" id="IPR000262">
    <property type="entry name" value="FMN-dep_DH"/>
</dbReference>
<dbReference type="InterPro" id="IPR011179">
    <property type="entry name" value="IPdP_isomerase"/>
</dbReference>
<dbReference type="NCBIfam" id="TIGR02151">
    <property type="entry name" value="IPP_isom_2"/>
    <property type="match status" value="1"/>
</dbReference>
<dbReference type="PANTHER" id="PTHR43665">
    <property type="entry name" value="ISOPENTENYL-DIPHOSPHATE DELTA-ISOMERASE"/>
    <property type="match status" value="1"/>
</dbReference>
<dbReference type="PANTHER" id="PTHR43665:SF1">
    <property type="entry name" value="ISOPENTENYL-DIPHOSPHATE DELTA-ISOMERASE"/>
    <property type="match status" value="1"/>
</dbReference>
<dbReference type="Pfam" id="PF01070">
    <property type="entry name" value="FMN_dh"/>
    <property type="match status" value="1"/>
</dbReference>
<dbReference type="PIRSF" id="PIRSF003314">
    <property type="entry name" value="IPP_isomerase"/>
    <property type="match status" value="1"/>
</dbReference>
<dbReference type="SUPFAM" id="SSF51395">
    <property type="entry name" value="FMN-linked oxidoreductases"/>
    <property type="match status" value="1"/>
</dbReference>